<sequence>MDKNKTIRIALTKGRLEKAAVEIFENIGLDCSELKDKGRKLIFHDFKNSIDFVLVKAPDVLTYVEHGAADIGIVGKDTLLEMKKDFYEVLDLKVGKCKFSLASISSFKLNEGFNRMKIATKYPNVTREYFREKGIDVEIIKIEGSVELAPILNLADAIVDIVETGTTLKENGLVIFDDICDISARMIVNRASMKLNKDRITDIIQKVKNYVERES</sequence>
<evidence type="ECO:0000250" key="1"/>
<evidence type="ECO:0000305" key="2"/>
<name>HIS1_CLOAB</name>
<keyword id="KW-0028">Amino-acid biosynthesis</keyword>
<keyword id="KW-0067">ATP-binding</keyword>
<keyword id="KW-0963">Cytoplasm</keyword>
<keyword id="KW-0328">Glycosyltransferase</keyword>
<keyword id="KW-0368">Histidine biosynthesis</keyword>
<keyword id="KW-0547">Nucleotide-binding</keyword>
<keyword id="KW-1185">Reference proteome</keyword>
<keyword id="KW-0808">Transferase</keyword>
<gene>
    <name type="primary">hisG</name>
    <name type="ordered locus">CA_C0936</name>
</gene>
<protein>
    <recommendedName>
        <fullName>ATP phosphoribosyltransferase</fullName>
        <shortName>ATP-PRT</shortName>
        <shortName>ATP-PRTase</shortName>
        <ecNumber>2.4.2.17</ecNumber>
    </recommendedName>
</protein>
<accession>Q97KI3</accession>
<reference key="1">
    <citation type="journal article" date="2001" name="J. Bacteriol.">
        <title>Genome sequence and comparative analysis of the solvent-producing bacterium Clostridium acetobutylicum.</title>
        <authorList>
            <person name="Noelling J."/>
            <person name="Breton G."/>
            <person name="Omelchenko M.V."/>
            <person name="Makarova K.S."/>
            <person name="Zeng Q."/>
            <person name="Gibson R."/>
            <person name="Lee H.M."/>
            <person name="Dubois J."/>
            <person name="Qiu D."/>
            <person name="Hitti J."/>
            <person name="Wolf Y.I."/>
            <person name="Tatusov R.L."/>
            <person name="Sabathe F."/>
            <person name="Doucette-Stamm L.A."/>
            <person name="Soucaille P."/>
            <person name="Daly M.J."/>
            <person name="Bennett G.N."/>
            <person name="Koonin E.V."/>
            <person name="Smith D.R."/>
        </authorList>
    </citation>
    <scope>NUCLEOTIDE SEQUENCE [LARGE SCALE GENOMIC DNA]</scope>
    <source>
        <strain>ATCC 824 / DSM 792 / JCM 1419 / IAM 19013 / LMG 5710 / NBRC 13948 / NRRL B-527 / VKM B-1787 / 2291 / W</strain>
    </source>
</reference>
<proteinExistence type="inferred from homology"/>
<dbReference type="EC" id="2.4.2.17"/>
<dbReference type="EMBL" id="AE001437">
    <property type="protein sequence ID" value="AAK78912.1"/>
    <property type="molecule type" value="Genomic_DNA"/>
</dbReference>
<dbReference type="PIR" id="E97015">
    <property type="entry name" value="E97015"/>
</dbReference>
<dbReference type="RefSeq" id="NP_347572.1">
    <property type="nucleotide sequence ID" value="NC_003030.1"/>
</dbReference>
<dbReference type="RefSeq" id="WP_010964254.1">
    <property type="nucleotide sequence ID" value="NC_003030.1"/>
</dbReference>
<dbReference type="SMR" id="Q97KI3"/>
<dbReference type="STRING" id="272562.CA_C0936"/>
<dbReference type="GeneID" id="44997446"/>
<dbReference type="KEGG" id="cac:CA_C0936"/>
<dbReference type="PATRIC" id="fig|272562.8.peg.1146"/>
<dbReference type="eggNOG" id="COG0040">
    <property type="taxonomic scope" value="Bacteria"/>
</dbReference>
<dbReference type="HOGENOM" id="CLU_038115_2_0_9"/>
<dbReference type="OrthoDB" id="9801867at2"/>
<dbReference type="UniPathway" id="UPA00031">
    <property type="reaction ID" value="UER00006"/>
</dbReference>
<dbReference type="Proteomes" id="UP000000814">
    <property type="component" value="Chromosome"/>
</dbReference>
<dbReference type="GO" id="GO:0005737">
    <property type="term" value="C:cytoplasm"/>
    <property type="evidence" value="ECO:0007669"/>
    <property type="project" value="UniProtKB-SubCell"/>
</dbReference>
<dbReference type="GO" id="GO:0005524">
    <property type="term" value="F:ATP binding"/>
    <property type="evidence" value="ECO:0007669"/>
    <property type="project" value="UniProtKB-KW"/>
</dbReference>
<dbReference type="GO" id="GO:0003879">
    <property type="term" value="F:ATP phosphoribosyltransferase activity"/>
    <property type="evidence" value="ECO:0007669"/>
    <property type="project" value="UniProtKB-UniRule"/>
</dbReference>
<dbReference type="GO" id="GO:0000105">
    <property type="term" value="P:L-histidine biosynthetic process"/>
    <property type="evidence" value="ECO:0007669"/>
    <property type="project" value="UniProtKB-UniRule"/>
</dbReference>
<dbReference type="CDD" id="cd13595">
    <property type="entry name" value="PBP2_HisGs"/>
    <property type="match status" value="1"/>
</dbReference>
<dbReference type="FunFam" id="3.40.190.10:FF:000008">
    <property type="entry name" value="ATP phosphoribosyltransferase"/>
    <property type="match status" value="1"/>
</dbReference>
<dbReference type="Gene3D" id="3.40.190.10">
    <property type="entry name" value="Periplasmic binding protein-like II"/>
    <property type="match status" value="2"/>
</dbReference>
<dbReference type="HAMAP" id="MF_01018">
    <property type="entry name" value="HisG_Short"/>
    <property type="match status" value="1"/>
</dbReference>
<dbReference type="InterPro" id="IPR013820">
    <property type="entry name" value="ATP_PRibTrfase_cat"/>
</dbReference>
<dbReference type="InterPro" id="IPR018198">
    <property type="entry name" value="ATP_PRibTrfase_CS"/>
</dbReference>
<dbReference type="InterPro" id="IPR001348">
    <property type="entry name" value="ATP_PRibTrfase_HisG"/>
</dbReference>
<dbReference type="InterPro" id="IPR024893">
    <property type="entry name" value="ATP_PRibTrfase_HisG_short"/>
</dbReference>
<dbReference type="NCBIfam" id="TIGR00070">
    <property type="entry name" value="hisG"/>
    <property type="match status" value="1"/>
</dbReference>
<dbReference type="PANTHER" id="PTHR21403:SF8">
    <property type="entry name" value="ATP PHOSPHORIBOSYLTRANSFERASE"/>
    <property type="match status" value="1"/>
</dbReference>
<dbReference type="PANTHER" id="PTHR21403">
    <property type="entry name" value="ATP PHOSPHORIBOSYLTRANSFERASE ATP-PRTASE"/>
    <property type="match status" value="1"/>
</dbReference>
<dbReference type="Pfam" id="PF01634">
    <property type="entry name" value="HisG"/>
    <property type="match status" value="1"/>
</dbReference>
<dbReference type="SUPFAM" id="SSF53850">
    <property type="entry name" value="Periplasmic binding protein-like II"/>
    <property type="match status" value="1"/>
</dbReference>
<dbReference type="PROSITE" id="PS01316">
    <property type="entry name" value="ATP_P_PHORIBOSYLTR"/>
    <property type="match status" value="1"/>
</dbReference>
<comment type="function">
    <text evidence="1">Catalyzes the condensation of ATP and 5-phosphoribose 1-diphosphate to form N'-(5'-phosphoribosyl)-ATP (PR-ATP). Has a crucial role in the pathway because the rate of histidine biosynthesis seems to be controlled primarily by regulation of HisG enzymatic activity (By similarity).</text>
</comment>
<comment type="catalytic activity">
    <reaction>
        <text>1-(5-phospho-beta-D-ribosyl)-ATP + diphosphate = 5-phospho-alpha-D-ribose 1-diphosphate + ATP</text>
        <dbReference type="Rhea" id="RHEA:18473"/>
        <dbReference type="ChEBI" id="CHEBI:30616"/>
        <dbReference type="ChEBI" id="CHEBI:33019"/>
        <dbReference type="ChEBI" id="CHEBI:58017"/>
        <dbReference type="ChEBI" id="CHEBI:73183"/>
        <dbReference type="EC" id="2.4.2.17"/>
    </reaction>
</comment>
<comment type="pathway">
    <text>Amino-acid biosynthesis; L-histidine biosynthesis; L-histidine from 5-phospho-alpha-D-ribose 1-diphosphate: step 1/9.</text>
</comment>
<comment type="subunit">
    <text evidence="1">Heteromultimer composed of HisG and HisZ subunits.</text>
</comment>
<comment type="subcellular location">
    <subcellularLocation>
        <location evidence="1">Cytoplasm</location>
    </subcellularLocation>
</comment>
<comment type="domain">
    <text>Lacks the C-terminal regulatory region which is replaced by HisZ.</text>
</comment>
<comment type="similarity">
    <text evidence="2">Belongs to the ATP phosphoribosyltransferase family. Short subfamily.</text>
</comment>
<feature type="chain" id="PRO_0000151906" description="ATP phosphoribosyltransferase">
    <location>
        <begin position="1"/>
        <end position="215"/>
    </location>
</feature>
<organism>
    <name type="scientific">Clostridium acetobutylicum (strain ATCC 824 / DSM 792 / JCM 1419 / IAM 19013 / LMG 5710 / NBRC 13948 / NRRL B-527 / VKM B-1787 / 2291 / W)</name>
    <dbReference type="NCBI Taxonomy" id="272562"/>
    <lineage>
        <taxon>Bacteria</taxon>
        <taxon>Bacillati</taxon>
        <taxon>Bacillota</taxon>
        <taxon>Clostridia</taxon>
        <taxon>Eubacteriales</taxon>
        <taxon>Clostridiaceae</taxon>
        <taxon>Clostridium</taxon>
    </lineage>
</organism>